<protein>
    <recommendedName>
        <fullName evidence="1">Neuraminidase</fullName>
        <ecNumber evidence="1">3.2.1.18</ecNumber>
    </recommendedName>
</protein>
<organismHost>
    <name type="scientific">Aves</name>
    <dbReference type="NCBI Taxonomy" id="8782"/>
</organismHost>
<proteinExistence type="inferred from homology"/>
<organism>
    <name type="scientific">Influenza A virus (strain A/Tern/South Africa/1961 H5N3)</name>
    <dbReference type="NCBI Taxonomy" id="384510"/>
    <lineage>
        <taxon>Viruses</taxon>
        <taxon>Riboviria</taxon>
        <taxon>Orthornavirae</taxon>
        <taxon>Negarnaviricota</taxon>
        <taxon>Polyploviricotina</taxon>
        <taxon>Insthoviricetes</taxon>
        <taxon>Articulavirales</taxon>
        <taxon>Orthomyxoviridae</taxon>
        <taxon>Alphainfluenzavirus</taxon>
        <taxon>Alphainfluenzavirus influenzae</taxon>
        <taxon>Influenza A virus</taxon>
    </lineage>
</organism>
<sequence length="469" mass="51894">MNPNQKIITIGVVNTTLSTIALLIGVGNLIFNTVIHEKIGDHQTVVYPTITAPVVPNCSDTIITYNNTVINNITTTIITEAERHFKPSLPLCPFRGFFPFHKDNAIRLGENKDVIVTREPYVSCDNDNCWSFALAQGALLGTKHSNGTIKDRTPYRSLIRFPIGTAPVLGNYKEICVAWSSSSCFDGKEWMHVCMTGNDNDASAQIIYAGKMTDSIKSWRRDILRTQESECQCIDGTCVVAVTDGPAANSADHRVYWIREGKVIKYENVPKTKIQHLEECSCYVDTDVYCVCRDNWKGSNRPWMRINNETILETGYVCSKFHSDTPRPADPSTVSCDSPSNVNGGPGVKGFGFKTGDDVWLGRTVSTNGRSGFEIIKVTEGWINSPNHAKSVTQTLVSNNDWSGYSGSFIVENNGCFQPCFYIELIRGRTNKNDDVSWTSNSIVTFCGLDNEPGSGNWPDGSNIGFMPK</sequence>
<comment type="function">
    <text evidence="1">Catalyzes the removal of terminal sialic acid residues from viral and cellular glycoconjugates. Cleaves off the terminal sialic acids on the glycosylated HA during virus budding to facilitate virus release. Additionally helps virus spread through the circulation by further removing sialic acids from the cell surface. These cleavages prevent self-aggregation and ensure the efficient spread of the progeny virus from cell to cell. Otherwise, infection would be limited to one round of replication. Described as a receptor-destroying enzyme because it cleaves a terminal sialic acid from the cellular receptors. May facilitate viral invasion of the upper airways by cleaving the sialic acid moieties on the mucin of the airway epithelial cells. Likely to plays a role in the budding process through its association with lipid rafts during intracellular transport. May additionally display a raft-association independent effect on budding. Plays a role in the determination of host range restriction on replication and virulence. Sialidase activity in late endosome/lysosome traffic seems to enhance virus replication.</text>
</comment>
<comment type="catalytic activity">
    <reaction evidence="1">
        <text>Hydrolysis of alpha-(2-&gt;3)-, alpha-(2-&gt;6)-, alpha-(2-&gt;8)- glycosidic linkages of terminal sialic acid residues in oligosaccharides, glycoproteins, glycolipids, colominic acid and synthetic substrates.</text>
        <dbReference type="EC" id="3.2.1.18"/>
    </reaction>
</comment>
<comment type="cofactor">
    <cofactor evidence="1">
        <name>Ca(2+)</name>
        <dbReference type="ChEBI" id="CHEBI:29108"/>
    </cofactor>
</comment>
<comment type="activity regulation">
    <text evidence="1">Inhibited by the neuraminidase inhibitors zanamivir (Relenza) and oseltamivir (Tamiflu). These drugs interfere with the release of progeny virus from infected cells and are effective against all influenza strains. Resistance to neuraminidase inhibitors is quite rare.</text>
</comment>
<comment type="subunit">
    <text evidence="1">Homotetramer.</text>
</comment>
<comment type="subcellular location">
    <subcellularLocation>
        <location evidence="1">Virion membrane</location>
    </subcellularLocation>
    <subcellularLocation>
        <location evidence="1">Host apical cell membrane</location>
        <topology evidence="1">Single-pass type II membrane protein</topology>
    </subcellularLocation>
    <text evidence="1">Preferentially accumulates at the apical plasma membrane in infected polarized epithelial cells, which is the virus assembly site. Uses lipid rafts for cell surface transport and apical sorting. In the virion, forms a mushroom-shaped spike on the surface of the membrane.</text>
</comment>
<comment type="domain">
    <text evidence="1">Intact N-terminus is essential for virion morphogenesis. Possesses two apical sorting signals, one in the ectodomain, which is likely to be a glycan, and the other in the transmembrane domain. The transmembrane domain also plays a role in lipid raft association.</text>
</comment>
<comment type="PTM">
    <text evidence="1">N-glycosylated.</text>
</comment>
<comment type="miscellaneous">
    <text>The influenza A genome consist of 8 RNA segments. Genetic variation of hemagglutinin and/or neuraminidase genes results in the emergence of new influenza strains. The mechanism of variation can be the result of point mutations or the result of genetic reassortment between segments of two different strains.</text>
</comment>
<comment type="similarity">
    <text evidence="1">Belongs to the glycosyl hydrolase 34 family.</text>
</comment>
<feature type="chain" id="PRO_0000280155" description="Neuraminidase">
    <location>
        <begin position="1"/>
        <end position="469"/>
    </location>
</feature>
<feature type="topological domain" description="Intravirion" evidence="1">
    <location>
        <begin position="1"/>
        <end position="6"/>
    </location>
</feature>
<feature type="transmembrane region" description="Helical" evidence="1">
    <location>
        <begin position="7"/>
        <end position="29"/>
    </location>
</feature>
<feature type="topological domain" description="Virion surface" evidence="1">
    <location>
        <begin position="30"/>
        <end position="469"/>
    </location>
</feature>
<feature type="region of interest" description="Involved in apical transport and lipid raft association" evidence="1">
    <location>
        <begin position="11"/>
        <end position="33"/>
    </location>
</feature>
<feature type="region of interest" description="Hypervariable stalk region" evidence="1">
    <location>
        <begin position="36"/>
        <end position="88"/>
    </location>
</feature>
<feature type="region of interest" description="Head of neuraminidase" evidence="1">
    <location>
        <begin position="91"/>
        <end position="469"/>
    </location>
</feature>
<feature type="active site" description="Proton donor/acceptor" evidence="1">
    <location>
        <position position="151"/>
    </location>
</feature>
<feature type="active site" description="Nucleophile" evidence="1">
    <location>
        <position position="405"/>
    </location>
</feature>
<feature type="binding site" evidence="1">
    <location>
        <position position="118"/>
    </location>
    <ligand>
        <name>substrate</name>
    </ligand>
</feature>
<feature type="binding site" evidence="1">
    <location>
        <position position="152"/>
    </location>
    <ligand>
        <name>substrate</name>
    </ligand>
</feature>
<feature type="binding site" evidence="1">
    <location>
        <begin position="278"/>
        <end position="279"/>
    </location>
    <ligand>
        <name>substrate</name>
    </ligand>
</feature>
<feature type="binding site" evidence="1">
    <location>
        <position position="293"/>
    </location>
    <ligand>
        <name>substrate</name>
    </ligand>
</feature>
<feature type="binding site" evidence="1">
    <location>
        <position position="294"/>
    </location>
    <ligand>
        <name>Ca(2+)</name>
        <dbReference type="ChEBI" id="CHEBI:29108"/>
    </ligand>
</feature>
<feature type="binding site" evidence="1">
    <location>
        <position position="298"/>
    </location>
    <ligand>
        <name>Ca(2+)</name>
        <dbReference type="ChEBI" id="CHEBI:29108"/>
    </ligand>
</feature>
<feature type="binding site" evidence="1">
    <location>
        <position position="324"/>
    </location>
    <ligand>
        <name>Ca(2+)</name>
        <dbReference type="ChEBI" id="CHEBI:29108"/>
    </ligand>
</feature>
<feature type="binding site" evidence="1">
    <location>
        <position position="370"/>
    </location>
    <ligand>
        <name>substrate</name>
    </ligand>
</feature>
<feature type="glycosylation site" description="N-linked (GlcNAc...) asparagine; by host" evidence="1">
    <location>
        <position position="57"/>
    </location>
</feature>
<feature type="glycosylation site" description="N-linked (GlcNAc...) asparagine; by host" evidence="1">
    <location>
        <position position="66"/>
    </location>
</feature>
<feature type="glycosylation site" description="N-linked (GlcNAc...) asparagine; by host" evidence="1">
    <location>
        <position position="72"/>
    </location>
</feature>
<feature type="glycosylation site" description="N-linked (GlcNAc...) asparagine; by host" evidence="1">
    <location>
        <position position="146"/>
    </location>
</feature>
<feature type="glycosylation site" description="N-linked (GlcNAc...) asparagine; by host" evidence="1">
    <location>
        <position position="308"/>
    </location>
</feature>
<feature type="disulfide bond" evidence="1">
    <location>
        <begin position="92"/>
        <end position="416"/>
    </location>
</feature>
<feature type="disulfide bond" evidence="1">
    <location>
        <begin position="124"/>
        <end position="129"/>
    </location>
</feature>
<feature type="disulfide bond" evidence="1">
    <location>
        <begin position="184"/>
        <end position="231"/>
    </location>
</feature>
<feature type="disulfide bond" evidence="1">
    <location>
        <begin position="233"/>
        <end position="238"/>
    </location>
</feature>
<feature type="disulfide bond" evidence="1">
    <location>
        <begin position="280"/>
        <end position="292"/>
    </location>
</feature>
<feature type="disulfide bond" evidence="1">
    <location>
        <begin position="282"/>
        <end position="290"/>
    </location>
</feature>
<feature type="disulfide bond" evidence="1">
    <location>
        <begin position="318"/>
        <end position="336"/>
    </location>
</feature>
<feature type="disulfide bond" evidence="1">
    <location>
        <begin position="420"/>
        <end position="447"/>
    </location>
</feature>
<reference key="1">
    <citation type="submission" date="2002-12" db="EMBL/GenBank/DDBJ databases">
        <title>Genetic analysis of multiple N3, N4, and N6 influenza A virus neuraminidase genes.</title>
        <authorList>
            <person name="Webby R.J."/>
            <person name="Humberd J.L."/>
            <person name="Krauss S.L."/>
        </authorList>
    </citation>
    <scope>NUCLEOTIDE SEQUENCE [GENOMIC RNA]</scope>
</reference>
<reference key="2">
    <citation type="journal article" date="2004" name="Virus Res.">
        <title>Assembly and budding of influenza virus.</title>
        <authorList>
            <person name="Nayak D.P."/>
            <person name="Hui E.K."/>
            <person name="Barman S."/>
        </authorList>
    </citation>
    <scope>REVIEW</scope>
</reference>
<reference key="3">
    <citation type="journal article" date="2005" name="N. Engl. J. Med.">
        <title>Neuraminidase inhibitors for influenza.</title>
        <authorList>
            <person name="Moscona A."/>
        </authorList>
    </citation>
    <scope>REVIEW</scope>
</reference>
<reference key="4">
    <citation type="journal article" date="2005" name="Biol. Pharm. Bull.">
        <title>Sialobiology of influenza: molecular mechanism of host range variation of influenza viruses.</title>
        <authorList>
            <person name="Suzuki Y."/>
        </authorList>
    </citation>
    <scope>REVIEW</scope>
</reference>
<keyword id="KW-0106">Calcium</keyword>
<keyword id="KW-1015">Disulfide bond</keyword>
<keyword id="KW-0325">Glycoprotein</keyword>
<keyword id="KW-0326">Glycosidase</keyword>
<keyword id="KW-1032">Host cell membrane</keyword>
<keyword id="KW-1043">Host membrane</keyword>
<keyword id="KW-0378">Hydrolase</keyword>
<keyword id="KW-0472">Membrane</keyword>
<keyword id="KW-0479">Metal-binding</keyword>
<keyword id="KW-0735">Signal-anchor</keyword>
<keyword id="KW-0812">Transmembrane</keyword>
<keyword id="KW-1133">Transmembrane helix</keyword>
<keyword id="KW-0946">Virion</keyword>
<name>NRAM_I61A0</name>
<gene>
    <name evidence="1" type="primary">NA</name>
</gene>
<evidence type="ECO:0000255" key="1">
    <source>
        <dbReference type="HAMAP-Rule" id="MF_04071"/>
    </source>
</evidence>
<dbReference type="EC" id="3.2.1.18" evidence="1"/>
<dbReference type="EMBL" id="AY207524">
    <property type="protein sequence ID" value="AAO62038.1"/>
    <property type="molecule type" value="Genomic_DNA"/>
</dbReference>
<dbReference type="SMR" id="Q6XV52"/>
<dbReference type="CAZy" id="GH34">
    <property type="family name" value="Glycoside Hydrolase Family 34"/>
</dbReference>
<dbReference type="GlyCosmos" id="Q6XV52">
    <property type="glycosylation" value="5 sites, No reported glycans"/>
</dbReference>
<dbReference type="GO" id="GO:0020002">
    <property type="term" value="C:host cell plasma membrane"/>
    <property type="evidence" value="ECO:0007669"/>
    <property type="project" value="UniProtKB-SubCell"/>
</dbReference>
<dbReference type="GO" id="GO:0016020">
    <property type="term" value="C:membrane"/>
    <property type="evidence" value="ECO:0007669"/>
    <property type="project" value="UniProtKB-UniRule"/>
</dbReference>
<dbReference type="GO" id="GO:0055036">
    <property type="term" value="C:virion membrane"/>
    <property type="evidence" value="ECO:0007669"/>
    <property type="project" value="UniProtKB-SubCell"/>
</dbReference>
<dbReference type="GO" id="GO:0004308">
    <property type="term" value="F:exo-alpha-sialidase activity"/>
    <property type="evidence" value="ECO:0007669"/>
    <property type="project" value="UniProtKB-UniRule"/>
</dbReference>
<dbReference type="GO" id="GO:0046872">
    <property type="term" value="F:metal ion binding"/>
    <property type="evidence" value="ECO:0007669"/>
    <property type="project" value="UniProtKB-UniRule"/>
</dbReference>
<dbReference type="GO" id="GO:0005975">
    <property type="term" value="P:carbohydrate metabolic process"/>
    <property type="evidence" value="ECO:0007669"/>
    <property type="project" value="InterPro"/>
</dbReference>
<dbReference type="GO" id="GO:0046761">
    <property type="term" value="P:viral budding from plasma membrane"/>
    <property type="evidence" value="ECO:0007669"/>
    <property type="project" value="UniProtKB-UniRule"/>
</dbReference>
<dbReference type="Gene3D" id="2.120.10.10">
    <property type="match status" value="1"/>
</dbReference>
<dbReference type="HAMAP" id="MF_04071">
    <property type="entry name" value="INFV_NRAM"/>
    <property type="match status" value="1"/>
</dbReference>
<dbReference type="InterPro" id="IPR001860">
    <property type="entry name" value="Glyco_hydro_34"/>
</dbReference>
<dbReference type="InterPro" id="IPR036278">
    <property type="entry name" value="Sialidase_sf"/>
</dbReference>
<dbReference type="Pfam" id="PF00064">
    <property type="entry name" value="Neur"/>
    <property type="match status" value="1"/>
</dbReference>
<dbReference type="SUPFAM" id="SSF50939">
    <property type="entry name" value="Sialidases"/>
    <property type="match status" value="1"/>
</dbReference>
<accession>Q6XV52</accession>